<sequence length="199" mass="21653">MISPENITGLILAGGRAQRMGGIDKGLISFHQKPLIESAINRLKNQVGPILINANRNITKYAGYGYPVVMDETPDFSGPLAGFSVGLKACKTSYLLTSPCDSPLLPLDLAARLAAEMERGPFDLVYASSLESGKTWAQPVFCLMRANLQDSLTAFLTKGDLKIDRWFKELKSSTVIFDDAQAFANVNTPEELKILEAAL</sequence>
<feature type="chain" id="PRO_1000115805" description="Molybdenum cofactor guanylyltransferase">
    <location>
        <begin position="1"/>
        <end position="199"/>
    </location>
</feature>
<feature type="binding site" evidence="1">
    <location>
        <begin position="12"/>
        <end position="14"/>
    </location>
    <ligand>
        <name>GTP</name>
        <dbReference type="ChEBI" id="CHEBI:37565"/>
    </ligand>
</feature>
<feature type="binding site" evidence="1">
    <location>
        <position position="25"/>
    </location>
    <ligand>
        <name>GTP</name>
        <dbReference type="ChEBI" id="CHEBI:37565"/>
    </ligand>
</feature>
<feature type="binding site" evidence="1">
    <location>
        <position position="53"/>
    </location>
    <ligand>
        <name>GTP</name>
        <dbReference type="ChEBI" id="CHEBI:37565"/>
    </ligand>
</feature>
<feature type="binding site" evidence="1">
    <location>
        <position position="71"/>
    </location>
    <ligand>
        <name>GTP</name>
        <dbReference type="ChEBI" id="CHEBI:37565"/>
    </ligand>
</feature>
<feature type="binding site" evidence="1">
    <location>
        <position position="101"/>
    </location>
    <ligand>
        <name>GTP</name>
        <dbReference type="ChEBI" id="CHEBI:37565"/>
    </ligand>
</feature>
<feature type="binding site" evidence="1">
    <location>
        <position position="101"/>
    </location>
    <ligand>
        <name>Mg(2+)</name>
        <dbReference type="ChEBI" id="CHEBI:18420"/>
    </ligand>
</feature>
<reference key="1">
    <citation type="journal article" date="2012" name="Stand. Genomic Sci.">
        <title>Complete genome sequence of Polynucleobacter necessarius subsp. asymbioticus type strain (QLW-P1DMWA-1(T)).</title>
        <authorList>
            <person name="Meincke L."/>
            <person name="Copeland A."/>
            <person name="Lapidus A."/>
            <person name="Lucas S."/>
            <person name="Berry K.W."/>
            <person name="Del Rio T.G."/>
            <person name="Hammon N."/>
            <person name="Dalin E."/>
            <person name="Tice H."/>
            <person name="Pitluck S."/>
            <person name="Richardson P."/>
            <person name="Bruce D."/>
            <person name="Goodwin L."/>
            <person name="Han C."/>
            <person name="Tapia R."/>
            <person name="Detter J.C."/>
            <person name="Schmutz J."/>
            <person name="Brettin T."/>
            <person name="Larimer F."/>
            <person name="Land M."/>
            <person name="Hauser L."/>
            <person name="Kyrpides N.C."/>
            <person name="Ivanova N."/>
            <person name="Goker M."/>
            <person name="Woyke T."/>
            <person name="Wu Q.L."/>
            <person name="Pockl M."/>
            <person name="Hahn M.W."/>
            <person name="Klenk H.P."/>
        </authorList>
    </citation>
    <scope>NUCLEOTIDE SEQUENCE [LARGE SCALE GENOMIC DNA]</scope>
    <source>
        <strain>DSM 18221 / CIP 109841 / QLW-P1DMWA-1</strain>
    </source>
</reference>
<keyword id="KW-0963">Cytoplasm</keyword>
<keyword id="KW-0342">GTP-binding</keyword>
<keyword id="KW-0460">Magnesium</keyword>
<keyword id="KW-0479">Metal-binding</keyword>
<keyword id="KW-0501">Molybdenum cofactor biosynthesis</keyword>
<keyword id="KW-0547">Nucleotide-binding</keyword>
<keyword id="KW-1185">Reference proteome</keyword>
<keyword id="KW-0808">Transferase</keyword>
<protein>
    <recommendedName>
        <fullName evidence="1">Molybdenum cofactor guanylyltransferase</fullName>
        <shortName evidence="1">MoCo guanylyltransferase</shortName>
        <ecNumber evidence="1">2.7.7.77</ecNumber>
    </recommendedName>
    <alternativeName>
        <fullName evidence="1">GTP:molybdopterin guanylyltransferase</fullName>
    </alternativeName>
    <alternativeName>
        <fullName evidence="1">Mo-MPT guanylyltransferase</fullName>
    </alternativeName>
    <alternativeName>
        <fullName evidence="1">Molybdopterin guanylyltransferase</fullName>
    </alternativeName>
    <alternativeName>
        <fullName evidence="1">Molybdopterin-guanine dinucleotide synthase</fullName>
        <shortName evidence="1">MGD synthase</shortName>
    </alternativeName>
</protein>
<evidence type="ECO:0000255" key="1">
    <source>
        <dbReference type="HAMAP-Rule" id="MF_00316"/>
    </source>
</evidence>
<dbReference type="EC" id="2.7.7.77" evidence="1"/>
<dbReference type="EMBL" id="CP000655">
    <property type="protein sequence ID" value="ABP33607.1"/>
    <property type="molecule type" value="Genomic_DNA"/>
</dbReference>
<dbReference type="RefSeq" id="WP_011902232.1">
    <property type="nucleotide sequence ID" value="NC_009379.1"/>
</dbReference>
<dbReference type="SMR" id="A4SVU3"/>
<dbReference type="GeneID" id="31480738"/>
<dbReference type="KEGG" id="pnu:Pnuc_0387"/>
<dbReference type="eggNOG" id="COG0746">
    <property type="taxonomic scope" value="Bacteria"/>
</dbReference>
<dbReference type="HOGENOM" id="CLU_055597_5_1_4"/>
<dbReference type="Proteomes" id="UP000000231">
    <property type="component" value="Chromosome"/>
</dbReference>
<dbReference type="GO" id="GO:0005737">
    <property type="term" value="C:cytoplasm"/>
    <property type="evidence" value="ECO:0007669"/>
    <property type="project" value="UniProtKB-SubCell"/>
</dbReference>
<dbReference type="GO" id="GO:0005525">
    <property type="term" value="F:GTP binding"/>
    <property type="evidence" value="ECO:0007669"/>
    <property type="project" value="UniProtKB-UniRule"/>
</dbReference>
<dbReference type="GO" id="GO:0046872">
    <property type="term" value="F:metal ion binding"/>
    <property type="evidence" value="ECO:0007669"/>
    <property type="project" value="UniProtKB-KW"/>
</dbReference>
<dbReference type="GO" id="GO:0061603">
    <property type="term" value="F:molybdenum cofactor guanylyltransferase activity"/>
    <property type="evidence" value="ECO:0007669"/>
    <property type="project" value="UniProtKB-EC"/>
</dbReference>
<dbReference type="GO" id="GO:1902758">
    <property type="term" value="P:bis(molybdopterin guanine dinucleotide)molybdenum biosynthetic process"/>
    <property type="evidence" value="ECO:0007669"/>
    <property type="project" value="TreeGrafter"/>
</dbReference>
<dbReference type="CDD" id="cd02503">
    <property type="entry name" value="MobA"/>
    <property type="match status" value="1"/>
</dbReference>
<dbReference type="Gene3D" id="3.90.550.10">
    <property type="entry name" value="Spore Coat Polysaccharide Biosynthesis Protein SpsA, Chain A"/>
    <property type="match status" value="1"/>
</dbReference>
<dbReference type="HAMAP" id="MF_00316">
    <property type="entry name" value="MobA"/>
    <property type="match status" value="1"/>
</dbReference>
<dbReference type="InterPro" id="IPR025877">
    <property type="entry name" value="MobA-like_NTP_Trfase"/>
</dbReference>
<dbReference type="InterPro" id="IPR013482">
    <property type="entry name" value="Molybde_CF_guanTrfase"/>
</dbReference>
<dbReference type="InterPro" id="IPR029044">
    <property type="entry name" value="Nucleotide-diphossugar_trans"/>
</dbReference>
<dbReference type="NCBIfam" id="TIGR02665">
    <property type="entry name" value="molyb_mobA"/>
    <property type="match status" value="1"/>
</dbReference>
<dbReference type="PANTHER" id="PTHR19136">
    <property type="entry name" value="MOLYBDENUM COFACTOR GUANYLYLTRANSFERASE"/>
    <property type="match status" value="1"/>
</dbReference>
<dbReference type="PANTHER" id="PTHR19136:SF81">
    <property type="entry name" value="MOLYBDENUM COFACTOR GUANYLYLTRANSFERASE"/>
    <property type="match status" value="1"/>
</dbReference>
<dbReference type="Pfam" id="PF12804">
    <property type="entry name" value="NTP_transf_3"/>
    <property type="match status" value="1"/>
</dbReference>
<dbReference type="SUPFAM" id="SSF53448">
    <property type="entry name" value="Nucleotide-diphospho-sugar transferases"/>
    <property type="match status" value="1"/>
</dbReference>
<accession>A4SVU3</accession>
<organism>
    <name type="scientific">Polynucleobacter asymbioticus (strain DSM 18221 / CIP 109841 / QLW-P1DMWA-1)</name>
    <name type="common">Polynucleobacter necessarius subsp. asymbioticus</name>
    <dbReference type="NCBI Taxonomy" id="312153"/>
    <lineage>
        <taxon>Bacteria</taxon>
        <taxon>Pseudomonadati</taxon>
        <taxon>Pseudomonadota</taxon>
        <taxon>Betaproteobacteria</taxon>
        <taxon>Burkholderiales</taxon>
        <taxon>Burkholderiaceae</taxon>
        <taxon>Polynucleobacter</taxon>
    </lineage>
</organism>
<name>MOBA_POLAQ</name>
<proteinExistence type="inferred from homology"/>
<comment type="function">
    <text evidence="1">Transfers a GMP moiety from GTP to Mo-molybdopterin (Mo-MPT) cofactor (Moco or molybdenum cofactor) to form Mo-molybdopterin guanine dinucleotide (Mo-MGD) cofactor.</text>
</comment>
<comment type="catalytic activity">
    <reaction evidence="1">
        <text>Mo-molybdopterin + GTP + H(+) = Mo-molybdopterin guanine dinucleotide + diphosphate</text>
        <dbReference type="Rhea" id="RHEA:34243"/>
        <dbReference type="ChEBI" id="CHEBI:15378"/>
        <dbReference type="ChEBI" id="CHEBI:33019"/>
        <dbReference type="ChEBI" id="CHEBI:37565"/>
        <dbReference type="ChEBI" id="CHEBI:71302"/>
        <dbReference type="ChEBI" id="CHEBI:71310"/>
        <dbReference type="EC" id="2.7.7.77"/>
    </reaction>
</comment>
<comment type="cofactor">
    <cofactor evidence="1">
        <name>Mg(2+)</name>
        <dbReference type="ChEBI" id="CHEBI:18420"/>
    </cofactor>
</comment>
<comment type="subunit">
    <text evidence="1">Monomer.</text>
</comment>
<comment type="subcellular location">
    <subcellularLocation>
        <location evidence="1">Cytoplasm</location>
    </subcellularLocation>
</comment>
<comment type="domain">
    <text evidence="1">The N-terminal domain determines nucleotide recognition and specific binding, while the C-terminal domain determines the specific binding to the target protein.</text>
</comment>
<comment type="similarity">
    <text evidence="1">Belongs to the MobA family.</text>
</comment>
<gene>
    <name evidence="1" type="primary">mobA</name>
    <name type="ordered locus">Pnuc_0387</name>
</gene>